<accession>Q81QK2</accession>
<accession>Q6HYS0</accession>
<accession>Q6KSS3</accession>
<name>CSPE_BACAN</name>
<comment type="function">
    <text evidence="1">Can bind to ATTGG and CCAAT motifs (Y-box motifs) of single-stranded oligonucleotides.</text>
</comment>
<comment type="subunit">
    <text evidence="1">Homodimer.</text>
</comment>
<comment type="subcellular location">
    <subcellularLocation>
        <location evidence="1">Cytoplasm</location>
    </subcellularLocation>
</comment>
<gene>
    <name type="primary">cspE</name>
    <name type="synonym">cspA-2</name>
    <name type="ordered locus">BA_2422</name>
    <name type="ordered locus">GBAA_2422</name>
    <name type="ordered locus">BAS2257</name>
</gene>
<keyword id="KW-0010">Activator</keyword>
<keyword id="KW-0963">Cytoplasm</keyword>
<keyword id="KW-0238">DNA-binding</keyword>
<keyword id="KW-1185">Reference proteome</keyword>
<keyword id="KW-0804">Transcription</keyword>
<keyword id="KW-0805">Transcription regulation</keyword>
<organism>
    <name type="scientific">Bacillus anthracis</name>
    <dbReference type="NCBI Taxonomy" id="1392"/>
    <lineage>
        <taxon>Bacteria</taxon>
        <taxon>Bacillati</taxon>
        <taxon>Bacillota</taxon>
        <taxon>Bacilli</taxon>
        <taxon>Bacillales</taxon>
        <taxon>Bacillaceae</taxon>
        <taxon>Bacillus</taxon>
        <taxon>Bacillus cereus group</taxon>
    </lineage>
</organism>
<sequence length="67" mass="7325">MTLTGKVKWFNSEKGFGFIEVEGGNDVFVHFSAITGDGFKSLDEGQEVSFEVEDGNRGPQAKNVVKL</sequence>
<protein>
    <recommendedName>
        <fullName>Cold shock-like protein CspE</fullName>
    </recommendedName>
</protein>
<reference key="1">
    <citation type="journal article" date="2003" name="Nature">
        <title>The genome sequence of Bacillus anthracis Ames and comparison to closely related bacteria.</title>
        <authorList>
            <person name="Read T.D."/>
            <person name="Peterson S.N."/>
            <person name="Tourasse N.J."/>
            <person name="Baillie L.W."/>
            <person name="Paulsen I.T."/>
            <person name="Nelson K.E."/>
            <person name="Tettelin H."/>
            <person name="Fouts D.E."/>
            <person name="Eisen J.A."/>
            <person name="Gill S.R."/>
            <person name="Holtzapple E.K."/>
            <person name="Okstad O.A."/>
            <person name="Helgason E."/>
            <person name="Rilstone J."/>
            <person name="Wu M."/>
            <person name="Kolonay J.F."/>
            <person name="Beanan M.J."/>
            <person name="Dodson R.J."/>
            <person name="Brinkac L.M."/>
            <person name="Gwinn M.L."/>
            <person name="DeBoy R.T."/>
            <person name="Madpu R."/>
            <person name="Daugherty S.C."/>
            <person name="Durkin A.S."/>
            <person name="Haft D.H."/>
            <person name="Nelson W.C."/>
            <person name="Peterson J.D."/>
            <person name="Pop M."/>
            <person name="Khouri H.M."/>
            <person name="Radune D."/>
            <person name="Benton J.L."/>
            <person name="Mahamoud Y."/>
            <person name="Jiang L."/>
            <person name="Hance I.R."/>
            <person name="Weidman J.F."/>
            <person name="Berry K.J."/>
            <person name="Plaut R.D."/>
            <person name="Wolf A.M."/>
            <person name="Watkins K.L."/>
            <person name="Nierman W.C."/>
            <person name="Hazen A."/>
            <person name="Cline R.T."/>
            <person name="Redmond C."/>
            <person name="Thwaite J.E."/>
            <person name="White O."/>
            <person name="Salzberg S.L."/>
            <person name="Thomason B."/>
            <person name="Friedlander A.M."/>
            <person name="Koehler T.M."/>
            <person name="Hanna P.C."/>
            <person name="Kolstoe A.-B."/>
            <person name="Fraser C.M."/>
        </authorList>
    </citation>
    <scope>NUCLEOTIDE SEQUENCE [LARGE SCALE GENOMIC DNA]</scope>
    <source>
        <strain>Ames / isolate Porton</strain>
    </source>
</reference>
<reference key="2">
    <citation type="journal article" date="2009" name="J. Bacteriol.">
        <title>The complete genome sequence of Bacillus anthracis Ames 'Ancestor'.</title>
        <authorList>
            <person name="Ravel J."/>
            <person name="Jiang L."/>
            <person name="Stanley S.T."/>
            <person name="Wilson M.R."/>
            <person name="Decker R.S."/>
            <person name="Read T.D."/>
            <person name="Worsham P."/>
            <person name="Keim P.S."/>
            <person name="Salzberg S.L."/>
            <person name="Fraser-Liggett C.M."/>
            <person name="Rasko D.A."/>
        </authorList>
    </citation>
    <scope>NUCLEOTIDE SEQUENCE [LARGE SCALE GENOMIC DNA]</scope>
    <source>
        <strain>Ames ancestor</strain>
    </source>
</reference>
<reference key="3">
    <citation type="submission" date="2004-01" db="EMBL/GenBank/DDBJ databases">
        <title>Complete genome sequence of Bacillus anthracis Sterne.</title>
        <authorList>
            <person name="Brettin T.S."/>
            <person name="Bruce D."/>
            <person name="Challacombe J.F."/>
            <person name="Gilna P."/>
            <person name="Han C."/>
            <person name="Hill K."/>
            <person name="Hitchcock P."/>
            <person name="Jackson P."/>
            <person name="Keim P."/>
            <person name="Longmire J."/>
            <person name="Lucas S."/>
            <person name="Okinaka R."/>
            <person name="Richardson P."/>
            <person name="Rubin E."/>
            <person name="Tice H."/>
        </authorList>
    </citation>
    <scope>NUCLEOTIDE SEQUENCE [LARGE SCALE GENOMIC DNA]</scope>
    <source>
        <strain>Sterne</strain>
    </source>
</reference>
<feature type="chain" id="PRO_0000100291" description="Cold shock-like protein CspE">
    <location>
        <begin position="1"/>
        <end position="67"/>
    </location>
</feature>
<feature type="domain" description="CSD">
    <location>
        <begin position="5"/>
        <end position="64"/>
    </location>
</feature>
<proteinExistence type="inferred from homology"/>
<evidence type="ECO:0000250" key="1"/>
<dbReference type="EMBL" id="AE016879">
    <property type="protein sequence ID" value="AAP26285.1"/>
    <property type="molecule type" value="Genomic_DNA"/>
</dbReference>
<dbReference type="EMBL" id="AE017334">
    <property type="protein sequence ID" value="AAT31539.1"/>
    <property type="molecule type" value="Genomic_DNA"/>
</dbReference>
<dbReference type="EMBL" id="AE017225">
    <property type="protein sequence ID" value="AAT54569.1"/>
    <property type="molecule type" value="Genomic_DNA"/>
</dbReference>
<dbReference type="RefSeq" id="NP_844799.1">
    <property type="nucleotide sequence ID" value="NC_003997.3"/>
</dbReference>
<dbReference type="RefSeq" id="YP_028518.1">
    <property type="nucleotide sequence ID" value="NC_005945.1"/>
</dbReference>
<dbReference type="SMR" id="Q81QK2"/>
<dbReference type="STRING" id="261594.GBAA_2422"/>
<dbReference type="DNASU" id="1086343"/>
<dbReference type="KEGG" id="ban:BA_2422"/>
<dbReference type="KEGG" id="bar:GBAA_2422"/>
<dbReference type="KEGG" id="bat:BAS2257"/>
<dbReference type="PATRIC" id="fig|198094.11.peg.2390"/>
<dbReference type="eggNOG" id="COG1278">
    <property type="taxonomic scope" value="Bacteria"/>
</dbReference>
<dbReference type="HOGENOM" id="CLU_117621_6_3_9"/>
<dbReference type="OMA" id="FIEQSQG"/>
<dbReference type="Proteomes" id="UP000000427">
    <property type="component" value="Chromosome"/>
</dbReference>
<dbReference type="Proteomes" id="UP000000594">
    <property type="component" value="Chromosome"/>
</dbReference>
<dbReference type="GO" id="GO:0005737">
    <property type="term" value="C:cytoplasm"/>
    <property type="evidence" value="ECO:0007669"/>
    <property type="project" value="UniProtKB-SubCell"/>
</dbReference>
<dbReference type="GO" id="GO:0003677">
    <property type="term" value="F:DNA binding"/>
    <property type="evidence" value="ECO:0007669"/>
    <property type="project" value="UniProtKB-KW"/>
</dbReference>
<dbReference type="CDD" id="cd04458">
    <property type="entry name" value="CSP_CDS"/>
    <property type="match status" value="1"/>
</dbReference>
<dbReference type="FunFam" id="2.40.50.140:FF:000006">
    <property type="entry name" value="Cold shock protein CspC"/>
    <property type="match status" value="1"/>
</dbReference>
<dbReference type="Gene3D" id="6.20.370.130">
    <property type="match status" value="1"/>
</dbReference>
<dbReference type="Gene3D" id="2.40.50.140">
    <property type="entry name" value="Nucleic acid-binding proteins"/>
    <property type="match status" value="1"/>
</dbReference>
<dbReference type="InterPro" id="IPR012156">
    <property type="entry name" value="Cold_shock_CspA"/>
</dbReference>
<dbReference type="InterPro" id="IPR050181">
    <property type="entry name" value="Cold_shock_domain"/>
</dbReference>
<dbReference type="InterPro" id="IPR011129">
    <property type="entry name" value="CSD"/>
</dbReference>
<dbReference type="InterPro" id="IPR019844">
    <property type="entry name" value="CSD_CS"/>
</dbReference>
<dbReference type="InterPro" id="IPR002059">
    <property type="entry name" value="CSP_DNA-bd"/>
</dbReference>
<dbReference type="InterPro" id="IPR012340">
    <property type="entry name" value="NA-bd_OB-fold"/>
</dbReference>
<dbReference type="PANTHER" id="PTHR11544">
    <property type="entry name" value="COLD SHOCK DOMAIN CONTAINING PROTEINS"/>
    <property type="match status" value="1"/>
</dbReference>
<dbReference type="Pfam" id="PF00313">
    <property type="entry name" value="CSD"/>
    <property type="match status" value="1"/>
</dbReference>
<dbReference type="PIRSF" id="PIRSF002599">
    <property type="entry name" value="Cold_shock_A"/>
    <property type="match status" value="1"/>
</dbReference>
<dbReference type="PRINTS" id="PR00050">
    <property type="entry name" value="COLDSHOCK"/>
</dbReference>
<dbReference type="SMART" id="SM00357">
    <property type="entry name" value="CSP"/>
    <property type="match status" value="1"/>
</dbReference>
<dbReference type="SUPFAM" id="SSF50249">
    <property type="entry name" value="Nucleic acid-binding proteins"/>
    <property type="match status" value="1"/>
</dbReference>
<dbReference type="PROSITE" id="PS00352">
    <property type="entry name" value="CSD_1"/>
    <property type="match status" value="1"/>
</dbReference>
<dbReference type="PROSITE" id="PS51857">
    <property type="entry name" value="CSD_2"/>
    <property type="match status" value="1"/>
</dbReference>